<organism>
    <name type="scientific">Desulfotalea psychrophila (strain LSv54 / DSM 12343)</name>
    <dbReference type="NCBI Taxonomy" id="177439"/>
    <lineage>
        <taxon>Bacteria</taxon>
        <taxon>Pseudomonadati</taxon>
        <taxon>Thermodesulfobacteriota</taxon>
        <taxon>Desulfobulbia</taxon>
        <taxon>Desulfobulbales</taxon>
        <taxon>Desulfocapsaceae</taxon>
        <taxon>Desulfotalea</taxon>
    </lineage>
</organism>
<proteinExistence type="inferred from homology"/>
<reference key="1">
    <citation type="journal article" date="2004" name="Environ. Microbiol.">
        <title>The genome of Desulfotalea psychrophila, a sulfate-reducing bacterium from permanently cold Arctic sediments.</title>
        <authorList>
            <person name="Rabus R."/>
            <person name="Ruepp A."/>
            <person name="Frickey T."/>
            <person name="Rattei T."/>
            <person name="Fartmann B."/>
            <person name="Stark M."/>
            <person name="Bauer M."/>
            <person name="Zibat A."/>
            <person name="Lombardot T."/>
            <person name="Becker I."/>
            <person name="Amann J."/>
            <person name="Gellner K."/>
            <person name="Teeling H."/>
            <person name="Leuschner W.D."/>
            <person name="Gloeckner F.-O."/>
            <person name="Lupas A.N."/>
            <person name="Amann R."/>
            <person name="Klenk H.-P."/>
        </authorList>
    </citation>
    <scope>NUCLEOTIDE SEQUENCE [LARGE SCALE GENOMIC DNA]</scope>
    <source>
        <strain>DSM 12343 / LSv54</strain>
    </source>
</reference>
<feature type="chain" id="PRO_0000174516" description="S-adenosylmethionine synthase">
    <location>
        <begin position="1"/>
        <end position="398"/>
    </location>
</feature>
<feature type="region of interest" description="Flexible loop" evidence="1">
    <location>
        <begin position="110"/>
        <end position="120"/>
    </location>
</feature>
<feature type="binding site" description="in other chain" evidence="1">
    <location>
        <position position="26"/>
    </location>
    <ligand>
        <name>ATP</name>
        <dbReference type="ChEBI" id="CHEBI:30616"/>
        <note>ligand shared between two neighboring subunits</note>
    </ligand>
</feature>
<feature type="binding site" evidence="1">
    <location>
        <position position="28"/>
    </location>
    <ligand>
        <name>Mg(2+)</name>
        <dbReference type="ChEBI" id="CHEBI:18420"/>
    </ligand>
</feature>
<feature type="binding site" evidence="1">
    <location>
        <position position="54"/>
    </location>
    <ligand>
        <name>K(+)</name>
        <dbReference type="ChEBI" id="CHEBI:29103"/>
    </ligand>
</feature>
<feature type="binding site" description="in other chain" evidence="1">
    <location>
        <position position="67"/>
    </location>
    <ligand>
        <name>L-methionine</name>
        <dbReference type="ChEBI" id="CHEBI:57844"/>
        <note>ligand shared between two neighboring subunits</note>
    </ligand>
</feature>
<feature type="binding site" description="in other chain" evidence="1">
    <location>
        <position position="110"/>
    </location>
    <ligand>
        <name>L-methionine</name>
        <dbReference type="ChEBI" id="CHEBI:57844"/>
        <note>ligand shared between two neighboring subunits</note>
    </ligand>
</feature>
<feature type="binding site" description="in other chain" evidence="1">
    <location>
        <begin position="177"/>
        <end position="179"/>
    </location>
    <ligand>
        <name>ATP</name>
        <dbReference type="ChEBI" id="CHEBI:30616"/>
        <note>ligand shared between two neighboring subunits</note>
    </ligand>
</feature>
<feature type="binding site" description="in other chain" evidence="1">
    <location>
        <begin position="243"/>
        <end position="244"/>
    </location>
    <ligand>
        <name>ATP</name>
        <dbReference type="ChEBI" id="CHEBI:30616"/>
        <note>ligand shared between two neighboring subunits</note>
    </ligand>
</feature>
<feature type="binding site" evidence="1">
    <location>
        <position position="252"/>
    </location>
    <ligand>
        <name>ATP</name>
        <dbReference type="ChEBI" id="CHEBI:30616"/>
        <note>ligand shared between two neighboring subunits</note>
    </ligand>
</feature>
<feature type="binding site" evidence="1">
    <location>
        <position position="252"/>
    </location>
    <ligand>
        <name>L-methionine</name>
        <dbReference type="ChEBI" id="CHEBI:57844"/>
        <note>ligand shared between two neighboring subunits</note>
    </ligand>
</feature>
<feature type="binding site" description="in other chain" evidence="1">
    <location>
        <begin position="258"/>
        <end position="259"/>
    </location>
    <ligand>
        <name>ATP</name>
        <dbReference type="ChEBI" id="CHEBI:30616"/>
        <note>ligand shared between two neighboring subunits</note>
    </ligand>
</feature>
<feature type="binding site" evidence="1">
    <location>
        <position position="275"/>
    </location>
    <ligand>
        <name>ATP</name>
        <dbReference type="ChEBI" id="CHEBI:30616"/>
        <note>ligand shared between two neighboring subunits</note>
    </ligand>
</feature>
<feature type="binding site" evidence="1">
    <location>
        <position position="279"/>
    </location>
    <ligand>
        <name>ATP</name>
        <dbReference type="ChEBI" id="CHEBI:30616"/>
        <note>ligand shared between two neighboring subunits</note>
    </ligand>
</feature>
<feature type="binding site" description="in other chain" evidence="1">
    <location>
        <position position="283"/>
    </location>
    <ligand>
        <name>L-methionine</name>
        <dbReference type="ChEBI" id="CHEBI:57844"/>
        <note>ligand shared between two neighboring subunits</note>
    </ligand>
</feature>
<comment type="function">
    <text evidence="1">Catalyzes the formation of S-adenosylmethionine (AdoMet) from methionine and ATP. The overall synthetic reaction is composed of two sequential steps, AdoMet formation and the subsequent tripolyphosphate hydrolysis which occurs prior to release of AdoMet from the enzyme.</text>
</comment>
<comment type="catalytic activity">
    <reaction evidence="1">
        <text>L-methionine + ATP + H2O = S-adenosyl-L-methionine + phosphate + diphosphate</text>
        <dbReference type="Rhea" id="RHEA:21080"/>
        <dbReference type="ChEBI" id="CHEBI:15377"/>
        <dbReference type="ChEBI" id="CHEBI:30616"/>
        <dbReference type="ChEBI" id="CHEBI:33019"/>
        <dbReference type="ChEBI" id="CHEBI:43474"/>
        <dbReference type="ChEBI" id="CHEBI:57844"/>
        <dbReference type="ChEBI" id="CHEBI:59789"/>
        <dbReference type="EC" id="2.5.1.6"/>
    </reaction>
</comment>
<comment type="cofactor">
    <cofactor evidence="1">
        <name>Mg(2+)</name>
        <dbReference type="ChEBI" id="CHEBI:18420"/>
    </cofactor>
    <text evidence="1">Binds 2 divalent ions per subunit.</text>
</comment>
<comment type="cofactor">
    <cofactor evidence="1">
        <name>K(+)</name>
        <dbReference type="ChEBI" id="CHEBI:29103"/>
    </cofactor>
    <text evidence="1">Binds 1 potassium ion per subunit.</text>
</comment>
<comment type="pathway">
    <text evidence="1">Amino-acid biosynthesis; S-adenosyl-L-methionine biosynthesis; S-adenosyl-L-methionine from L-methionine: step 1/1.</text>
</comment>
<comment type="subunit">
    <text evidence="1">Homotetramer; dimer of dimers.</text>
</comment>
<comment type="subcellular location">
    <subcellularLocation>
        <location evidence="1">Cytoplasm</location>
    </subcellularLocation>
</comment>
<comment type="similarity">
    <text evidence="1">Belongs to the AdoMet synthase family.</text>
</comment>
<evidence type="ECO:0000255" key="1">
    <source>
        <dbReference type="HAMAP-Rule" id="MF_00086"/>
    </source>
</evidence>
<dbReference type="EC" id="2.5.1.6" evidence="1"/>
<dbReference type="EMBL" id="CR522870">
    <property type="protein sequence ID" value="CAG35530.1"/>
    <property type="molecule type" value="Genomic_DNA"/>
</dbReference>
<dbReference type="SMR" id="Q6AQ43"/>
<dbReference type="STRING" id="177439.DP0801"/>
<dbReference type="KEGG" id="dps:DP0801"/>
<dbReference type="eggNOG" id="COG0192">
    <property type="taxonomic scope" value="Bacteria"/>
</dbReference>
<dbReference type="HOGENOM" id="CLU_041802_1_1_7"/>
<dbReference type="UniPathway" id="UPA00315">
    <property type="reaction ID" value="UER00080"/>
</dbReference>
<dbReference type="Proteomes" id="UP000000602">
    <property type="component" value="Chromosome"/>
</dbReference>
<dbReference type="GO" id="GO:0005737">
    <property type="term" value="C:cytoplasm"/>
    <property type="evidence" value="ECO:0007669"/>
    <property type="project" value="UniProtKB-SubCell"/>
</dbReference>
<dbReference type="GO" id="GO:0005524">
    <property type="term" value="F:ATP binding"/>
    <property type="evidence" value="ECO:0007669"/>
    <property type="project" value="UniProtKB-UniRule"/>
</dbReference>
<dbReference type="GO" id="GO:0000287">
    <property type="term" value="F:magnesium ion binding"/>
    <property type="evidence" value="ECO:0007669"/>
    <property type="project" value="UniProtKB-UniRule"/>
</dbReference>
<dbReference type="GO" id="GO:0004478">
    <property type="term" value="F:methionine adenosyltransferase activity"/>
    <property type="evidence" value="ECO:0007669"/>
    <property type="project" value="UniProtKB-UniRule"/>
</dbReference>
<dbReference type="GO" id="GO:0006730">
    <property type="term" value="P:one-carbon metabolic process"/>
    <property type="evidence" value="ECO:0007669"/>
    <property type="project" value="UniProtKB-KW"/>
</dbReference>
<dbReference type="GO" id="GO:0006556">
    <property type="term" value="P:S-adenosylmethionine biosynthetic process"/>
    <property type="evidence" value="ECO:0007669"/>
    <property type="project" value="UniProtKB-UniRule"/>
</dbReference>
<dbReference type="CDD" id="cd18079">
    <property type="entry name" value="S-AdoMet_synt"/>
    <property type="match status" value="1"/>
</dbReference>
<dbReference type="FunFam" id="3.30.300.10:FF:000003">
    <property type="entry name" value="S-adenosylmethionine synthase"/>
    <property type="match status" value="1"/>
</dbReference>
<dbReference type="Gene3D" id="3.30.300.10">
    <property type="match status" value="3"/>
</dbReference>
<dbReference type="HAMAP" id="MF_00086">
    <property type="entry name" value="S_AdoMet_synth1"/>
    <property type="match status" value="1"/>
</dbReference>
<dbReference type="InterPro" id="IPR022631">
    <property type="entry name" value="ADOMET_SYNTHASE_CS"/>
</dbReference>
<dbReference type="InterPro" id="IPR022630">
    <property type="entry name" value="S-AdoMet_synt_C"/>
</dbReference>
<dbReference type="InterPro" id="IPR022629">
    <property type="entry name" value="S-AdoMet_synt_central"/>
</dbReference>
<dbReference type="InterPro" id="IPR022628">
    <property type="entry name" value="S-AdoMet_synt_N"/>
</dbReference>
<dbReference type="InterPro" id="IPR002133">
    <property type="entry name" value="S-AdoMet_synthetase"/>
</dbReference>
<dbReference type="InterPro" id="IPR022636">
    <property type="entry name" value="S-AdoMet_synthetase_sfam"/>
</dbReference>
<dbReference type="NCBIfam" id="TIGR01034">
    <property type="entry name" value="metK"/>
    <property type="match status" value="1"/>
</dbReference>
<dbReference type="PANTHER" id="PTHR11964">
    <property type="entry name" value="S-ADENOSYLMETHIONINE SYNTHETASE"/>
    <property type="match status" value="1"/>
</dbReference>
<dbReference type="Pfam" id="PF02773">
    <property type="entry name" value="S-AdoMet_synt_C"/>
    <property type="match status" value="1"/>
</dbReference>
<dbReference type="Pfam" id="PF02772">
    <property type="entry name" value="S-AdoMet_synt_M"/>
    <property type="match status" value="1"/>
</dbReference>
<dbReference type="Pfam" id="PF00438">
    <property type="entry name" value="S-AdoMet_synt_N"/>
    <property type="match status" value="1"/>
</dbReference>
<dbReference type="PIRSF" id="PIRSF000497">
    <property type="entry name" value="MAT"/>
    <property type="match status" value="1"/>
</dbReference>
<dbReference type="SUPFAM" id="SSF55973">
    <property type="entry name" value="S-adenosylmethionine synthetase"/>
    <property type="match status" value="3"/>
</dbReference>
<dbReference type="PROSITE" id="PS00376">
    <property type="entry name" value="ADOMET_SYNTHASE_1"/>
    <property type="match status" value="1"/>
</dbReference>
<dbReference type="PROSITE" id="PS00377">
    <property type="entry name" value="ADOMET_SYNTHASE_2"/>
    <property type="match status" value="1"/>
</dbReference>
<sequence>MLYICNKRRLFMSNYLFTSESVSEGHPDKVADQISDAILDAILEQDPQARVACETLVTTGMALIAGEITTSAWVDMPEVVRNTIKEIGYNSSEMGFDWQSCAVMTTIDKQSPDIAQGVNEGAGIDLDQGAGDQGLMFGYASNETDVLMPMPITLAHRLTRRQAQVRKSSILPWLRPDAKSQVTIEYENKIPKRIDAVVLSTQHDESISYNDLKEAVMEEIIKPTLPADMIDANTKFFINPTGRFVIGGPVGDCGLTGRKIIVDTYGGKALHGGGAFSGKDPSKVDRSSAYYGRYVAKNLVAAGIASELQIQVAYAIGIAQPVSINVNSFGTGRISDAAIKELILGNFDLRPKAIVQQLDLLRPIYRQTAAYGHFGRSDVEFPWERTDKIEELKSAAGL</sequence>
<gene>
    <name evidence="1" type="primary">metK</name>
    <name type="ordered locus">DP0801</name>
</gene>
<accession>Q6AQ43</accession>
<protein>
    <recommendedName>
        <fullName evidence="1">S-adenosylmethionine synthase</fullName>
        <shortName evidence="1">AdoMet synthase</shortName>
        <ecNumber evidence="1">2.5.1.6</ecNumber>
    </recommendedName>
    <alternativeName>
        <fullName evidence="1">MAT</fullName>
    </alternativeName>
    <alternativeName>
        <fullName evidence="1">Methionine adenosyltransferase</fullName>
    </alternativeName>
</protein>
<keyword id="KW-0067">ATP-binding</keyword>
<keyword id="KW-0963">Cytoplasm</keyword>
<keyword id="KW-0460">Magnesium</keyword>
<keyword id="KW-0479">Metal-binding</keyword>
<keyword id="KW-0547">Nucleotide-binding</keyword>
<keyword id="KW-0554">One-carbon metabolism</keyword>
<keyword id="KW-0630">Potassium</keyword>
<keyword id="KW-1185">Reference proteome</keyword>
<keyword id="KW-0808">Transferase</keyword>
<name>METK_DESPS</name>